<reference key="1">
    <citation type="journal article" date="1984" name="Nature">
        <title>DNA sequence and expression of the B95-8 Epstein-Barr virus genome.</title>
        <authorList>
            <person name="Baer R."/>
            <person name="Bankier A.T."/>
            <person name="Biggin M.D."/>
            <person name="Deininger P.L."/>
            <person name="Farrell P.J."/>
            <person name="Gibson T.J."/>
            <person name="Hatfull G."/>
            <person name="Hudson G.S."/>
            <person name="Satchwell S.C."/>
            <person name="Seguin C."/>
            <person name="Tuffnell P.S."/>
            <person name="Barrell B.G."/>
        </authorList>
    </citation>
    <scope>NUCLEOTIDE SEQUENCE [LARGE SCALE GENOMIC DNA]</scope>
</reference>
<reference key="2">
    <citation type="journal article" date="2003" name="Virology">
        <title>Updated Epstein-Barr virus (EBV) DNA sequence and analysis of a promoter for the BART (CST, BARF0) RNAs of EBV.</title>
        <authorList>
            <person name="de Jesus O."/>
            <person name="Smith P.R."/>
            <person name="Spender L.C."/>
            <person name="Elgueta Karstegl C."/>
            <person name="Niller H.H."/>
            <person name="Huang D."/>
            <person name="Farrell P.J."/>
        </authorList>
    </citation>
    <scope>GENOME REANNOTATION</scope>
</reference>
<reference key="3">
    <citation type="journal article" date="2004" name="Proc. Natl. Acad. Sci. U.S.A.">
        <title>Proteins of purified Epstein-Barr virus.</title>
        <authorList>
            <person name="Johannsen E."/>
            <person name="Luftig M."/>
            <person name="Chase M.R."/>
            <person name="Weicksel S."/>
            <person name="Cahir-McFarland E."/>
            <person name="Illanes D."/>
            <person name="Sarracino D."/>
            <person name="Kieff E."/>
        </authorList>
    </citation>
    <scope>IDENTIFICATION</scope>
</reference>
<name>CVC1_EBVB9</name>
<proteinExistence type="evidence at protein level"/>
<comment type="function">
    <text evidence="1">Capsid vertex-specific component that plays a role during viral DNA encapsidation, assuring correct genome cleavage and presumably stabilizing capsids that contain full-length viral genomes.</text>
</comment>
<comment type="subunit">
    <text evidence="1">Interacts (via C-terminus) with capsid vertex component 2/CVC2.</text>
</comment>
<comment type="subcellular location">
    <subcellularLocation>
        <location evidence="1">Virion</location>
    </subcellularLocation>
    <subcellularLocation>
        <location evidence="1">Host nucleus</location>
    </subcellularLocation>
</comment>
<comment type="similarity">
    <text evidence="1">Belongs to the herpesviridae CVC1 protein family.</text>
</comment>
<organism>
    <name type="scientific">Epstein-Barr virus (strain B95-8)</name>
    <name type="common">HHV-4</name>
    <name type="synonym">Human herpesvirus 4</name>
    <dbReference type="NCBI Taxonomy" id="10377"/>
    <lineage>
        <taxon>Viruses</taxon>
        <taxon>Duplodnaviria</taxon>
        <taxon>Heunggongvirae</taxon>
        <taxon>Peploviricota</taxon>
        <taxon>Herviviricetes</taxon>
        <taxon>Herpesvirales</taxon>
        <taxon>Orthoherpesviridae</taxon>
        <taxon>Gammaherpesvirinae</taxon>
        <taxon>Lymphocryptovirus</taxon>
        <taxon>Lymphocryptovirus humangamma4</taxon>
        <taxon>Epstein-Barr virus (strain GD1)</taxon>
    </lineage>
</organism>
<evidence type="ECO:0000255" key="1">
    <source>
        <dbReference type="HAMAP-Rule" id="MF_04017"/>
    </source>
</evidence>
<evidence type="ECO:0000256" key="2">
    <source>
        <dbReference type="SAM" id="MobiDB-lite"/>
    </source>
</evidence>
<feature type="chain" id="PRO_0000115964" description="Capsid vertex component 1">
    <location>
        <begin position="1"/>
        <end position="507"/>
    </location>
</feature>
<feature type="region of interest" description="Disordered" evidence="2">
    <location>
        <begin position="219"/>
        <end position="257"/>
    </location>
</feature>
<feature type="compositionally biased region" description="Gly residues" evidence="2">
    <location>
        <begin position="241"/>
        <end position="257"/>
    </location>
</feature>
<protein>
    <recommendedName>
        <fullName evidence="1">Capsid vertex component 1</fullName>
    </recommendedName>
</protein>
<organismHost>
    <name type="scientific">Homo sapiens</name>
    <name type="common">Human</name>
    <dbReference type="NCBI Taxonomy" id="9606"/>
</organismHost>
<keyword id="KW-0002">3D-structure</keyword>
<keyword id="KW-0167">Capsid protein</keyword>
<keyword id="KW-1048">Host nucleus</keyword>
<keyword id="KW-0426">Late protein</keyword>
<keyword id="KW-1185">Reference proteome</keyword>
<keyword id="KW-0231">Viral genome packaging</keyword>
<keyword id="KW-1188">Viral release from host cell</keyword>
<keyword id="KW-0946">Virion</keyword>
<accession>P03222</accession>
<accession>Q777C7</accession>
<dbReference type="EMBL" id="V01555">
    <property type="protein sequence ID" value="CAA24832.1"/>
    <property type="molecule type" value="Genomic_DNA"/>
</dbReference>
<dbReference type="EMBL" id="AJ507799">
    <property type="protein sequence ID" value="CAD53442.1"/>
    <property type="molecule type" value="Genomic_DNA"/>
</dbReference>
<dbReference type="PIR" id="D43044">
    <property type="entry name" value="QQBE41"/>
</dbReference>
<dbReference type="RefSeq" id="YP_401692.1">
    <property type="nucleotide sequence ID" value="NC_007605.1"/>
</dbReference>
<dbReference type="PDB" id="6W2D">
    <property type="method" value="EM"/>
    <property type="resolution" value="4.00 A"/>
    <property type="chains" value="v=1-507"/>
</dbReference>
<dbReference type="PDB" id="6W2E">
    <property type="method" value="EM"/>
    <property type="resolution" value="4.40 A"/>
    <property type="chains" value="v=1-507"/>
</dbReference>
<dbReference type="PDB" id="7BQX">
    <property type="method" value="EM"/>
    <property type="resolution" value="4.20 A"/>
    <property type="chains" value="C=1-507"/>
</dbReference>
<dbReference type="PDB" id="7BR7">
    <property type="method" value="EM"/>
    <property type="resolution" value="4.30 A"/>
    <property type="chains" value="C=1-507"/>
</dbReference>
<dbReference type="PDBsum" id="6W2D"/>
<dbReference type="PDBsum" id="6W2E"/>
<dbReference type="PDBsum" id="7BQX"/>
<dbReference type="PDBsum" id="7BR7"/>
<dbReference type="EMDB" id="EMD-21525"/>
<dbReference type="EMDB" id="EMD-21526"/>
<dbReference type="EMDB" id="EMD-30157"/>
<dbReference type="EMDB" id="EMD-30158"/>
<dbReference type="SMR" id="P03222"/>
<dbReference type="BioGRID" id="971744">
    <property type="interactions" value="1"/>
</dbReference>
<dbReference type="DNASU" id="3783702"/>
<dbReference type="GeneID" id="3783702"/>
<dbReference type="KEGG" id="vg:3783702"/>
<dbReference type="Proteomes" id="UP000153037">
    <property type="component" value="Segment"/>
</dbReference>
<dbReference type="GO" id="GO:0042025">
    <property type="term" value="C:host cell nucleus"/>
    <property type="evidence" value="ECO:0007669"/>
    <property type="project" value="UniProtKB-SubCell"/>
</dbReference>
<dbReference type="GO" id="GO:0019028">
    <property type="term" value="C:viral capsid"/>
    <property type="evidence" value="ECO:0007669"/>
    <property type="project" value="UniProtKB-KW"/>
</dbReference>
<dbReference type="GO" id="GO:0051276">
    <property type="term" value="P:chromosome organization"/>
    <property type="evidence" value="ECO:0007669"/>
    <property type="project" value="InterPro"/>
</dbReference>
<dbReference type="HAMAP" id="MF_04017">
    <property type="entry name" value="HSV_CVC1"/>
    <property type="match status" value="1"/>
</dbReference>
<dbReference type="InterPro" id="IPR007640">
    <property type="entry name" value="UL17-like"/>
</dbReference>
<dbReference type="Pfam" id="PF04559">
    <property type="entry name" value="Herpes_UL17"/>
    <property type="match status" value="1"/>
</dbReference>
<sequence>MDVHIDNQVLSGLGTPLLVHLFVPDTVMAELCPNRVPNCEGAWCQTLFSDRTGLTRVCRVFAARGMLPGRPSHRGTFTSVPVYCDEGLPELYNPFHVAALRFYDEGGLVGELQIYYLSLFEGAKRALTDGHLIREASGVQESAAAMQPIPIDPGPPGGAGIEHMPVAAAQVEHPKTYDLKQILLEITQEENRGEQRLGHAGSPALCLGLRLRAGAETKAAAETSVSKHHPALENPSNIRGSAGGEGGGGRAGTGGTVGVGSGALSRVPVSFSKTRRAIRESRALVRGIAHIFSPHALYVVTYPELSAQGRLHRMTAVTHASPATDLAEVSILGAPEREFRFLISVALRISASFREKLAMQAWTAQQEIPVVIPTSYSRIYKNSDLIREAFFTVQTRVSWESCWVKATISNAPKTPDACLWIDSHPLYEEGASAWGKVIDSRPPGGLVGAASQLVALGTDGHCVHLATTSDGQAFLVLPGGFVIKGQLALTPEERGYILARHGIRREQ</sequence>
<gene>
    <name evidence="1" type="primary">CVC1</name>
    <name type="ORF">BGLF1</name>
</gene>